<organismHost>
    <name type="scientific">Aves</name>
    <dbReference type="NCBI Taxonomy" id="8782"/>
</organismHost>
<organismHost>
    <name type="scientific">Cetacea</name>
    <name type="common">whales</name>
    <dbReference type="NCBI Taxonomy" id="9721"/>
</organismHost>
<organismHost>
    <name type="scientific">Homo sapiens</name>
    <name type="common">Human</name>
    <dbReference type="NCBI Taxonomy" id="9606"/>
</organismHost>
<organismHost>
    <name type="scientific">Phocidae</name>
    <name type="common">true seals</name>
    <dbReference type="NCBI Taxonomy" id="9709"/>
</organismHost>
<organismHost>
    <name type="scientific">Sus scrofa</name>
    <name type="common">Pig</name>
    <dbReference type="NCBI Taxonomy" id="9823"/>
</organismHost>
<gene>
    <name evidence="1" type="primary">NS</name>
</gene>
<organism>
    <name type="scientific">Influenza A virus (strain A/Memphis/110/1976 H3N2)</name>
    <dbReference type="NCBI Taxonomy" id="383581"/>
    <lineage>
        <taxon>Viruses</taxon>
        <taxon>Riboviria</taxon>
        <taxon>Orthornavirae</taxon>
        <taxon>Negarnaviricota</taxon>
        <taxon>Polyploviricotina</taxon>
        <taxon>Insthoviricetes</taxon>
        <taxon>Articulavirales</taxon>
        <taxon>Orthomyxoviridae</taxon>
        <taxon>Alphainfluenzavirus</taxon>
        <taxon>Alphainfluenzavirus influenzae</taxon>
        <taxon>Influenza A virus</taxon>
    </lineage>
</organism>
<dbReference type="EMBL" id="CY006839">
    <property type="protein sequence ID" value="ABC02271.1"/>
    <property type="molecule type" value="Genomic_RNA"/>
</dbReference>
<dbReference type="BMRB" id="Q2RFA0"/>
<dbReference type="SMR" id="Q2RFA0"/>
<dbReference type="Proteomes" id="UP000007792">
    <property type="component" value="Genome"/>
</dbReference>
<dbReference type="GO" id="GO:0030430">
    <property type="term" value="C:host cell cytoplasm"/>
    <property type="evidence" value="ECO:0007669"/>
    <property type="project" value="UniProtKB-SubCell"/>
</dbReference>
<dbReference type="GO" id="GO:0042025">
    <property type="term" value="C:host cell nucleus"/>
    <property type="evidence" value="ECO:0007669"/>
    <property type="project" value="UniProtKB-SubCell"/>
</dbReference>
<dbReference type="GO" id="GO:0030291">
    <property type="term" value="F:protein serine/threonine kinase inhibitor activity"/>
    <property type="evidence" value="ECO:0007669"/>
    <property type="project" value="UniProtKB-KW"/>
</dbReference>
<dbReference type="GO" id="GO:0003723">
    <property type="term" value="F:RNA binding"/>
    <property type="evidence" value="ECO:0007669"/>
    <property type="project" value="UniProtKB-KW"/>
</dbReference>
<dbReference type="GO" id="GO:0039540">
    <property type="term" value="P:symbiont-mediated suppression of host cytoplasmic pattern recognition receptor signaling pathway via inhibition of RIG-I activity"/>
    <property type="evidence" value="ECO:0007669"/>
    <property type="project" value="UniProtKB-KW"/>
</dbReference>
<dbReference type="GO" id="GO:0039657">
    <property type="term" value="P:symbiont-mediated suppression of host gene expression"/>
    <property type="evidence" value="ECO:0007669"/>
    <property type="project" value="UniProtKB-KW"/>
</dbReference>
<dbReference type="GO" id="GO:0039524">
    <property type="term" value="P:symbiont-mediated suppression of host mRNA processing"/>
    <property type="evidence" value="ECO:0007669"/>
    <property type="project" value="UniProtKB-KW"/>
</dbReference>
<dbReference type="GO" id="GO:0039580">
    <property type="term" value="P:symbiont-mediated suppression of host PKR/eIFalpha signaling"/>
    <property type="evidence" value="ECO:0007669"/>
    <property type="project" value="UniProtKB-KW"/>
</dbReference>
<dbReference type="GO" id="GO:0039502">
    <property type="term" value="P:symbiont-mediated suppression of host type I interferon-mediated signaling pathway"/>
    <property type="evidence" value="ECO:0007669"/>
    <property type="project" value="UniProtKB-KW"/>
</dbReference>
<dbReference type="FunFam" id="1.10.287.10:FF:000001">
    <property type="entry name" value="Non-structural protein 1"/>
    <property type="match status" value="1"/>
</dbReference>
<dbReference type="FunFam" id="3.30.420.330:FF:000001">
    <property type="entry name" value="Non-structural protein 1"/>
    <property type="match status" value="1"/>
</dbReference>
<dbReference type="Gene3D" id="3.30.420.330">
    <property type="entry name" value="Influenza virus non-structural protein, effector domain"/>
    <property type="match status" value="1"/>
</dbReference>
<dbReference type="Gene3D" id="1.10.287.10">
    <property type="entry name" value="S15/NS1, RNA-binding"/>
    <property type="match status" value="1"/>
</dbReference>
<dbReference type="HAMAP" id="MF_04066">
    <property type="entry name" value="INFV_NS1"/>
    <property type="match status" value="1"/>
</dbReference>
<dbReference type="InterPro" id="IPR004208">
    <property type="entry name" value="NS1"/>
</dbReference>
<dbReference type="InterPro" id="IPR000256">
    <property type="entry name" value="NS1A"/>
</dbReference>
<dbReference type="InterPro" id="IPR038064">
    <property type="entry name" value="NS1A_effect_dom-like_sf"/>
</dbReference>
<dbReference type="InterPro" id="IPR009068">
    <property type="entry name" value="uS15_NS1_RNA-bd_sf"/>
</dbReference>
<dbReference type="Pfam" id="PF00600">
    <property type="entry name" value="Flu_NS1"/>
    <property type="match status" value="1"/>
</dbReference>
<dbReference type="SUPFAM" id="SSF143021">
    <property type="entry name" value="Ns1 effector domain-like"/>
    <property type="match status" value="1"/>
</dbReference>
<dbReference type="SUPFAM" id="SSF47060">
    <property type="entry name" value="S15/NS1 RNA-binding domain"/>
    <property type="match status" value="1"/>
</dbReference>
<sequence>MDSNTVSSFQVDCFLWHVRKQIVDQELGDAPFLDRLRRDQKSLRGRGSTLGLDIETATHVGKQIVEKILKEESDEALTMTMASTPASRYITDMTTEELSRDWFMLMPKQKVEGPLCIRIDQAIMDKNIMLKANFSVIFDRLETLILLRAFTEEGAIVGEISPLPSFPGHTIEDVKNAIGVLIGGLEWNDNTVRVSKTLQRFAWGSSNEDGGPPLTPKQKRKMARTTRSKVRRDKMAD</sequence>
<protein>
    <recommendedName>
        <fullName evidence="1">Non-structural protein 1</fullName>
        <shortName evidence="1">NS1</shortName>
    </recommendedName>
    <alternativeName>
        <fullName evidence="1">NS1A</fullName>
    </alternativeName>
</protein>
<accession>Q2RFA0</accession>
<feature type="chain" id="PRO_0000324256" description="Non-structural protein 1">
    <location>
        <begin position="1"/>
        <end position="237"/>
    </location>
</feature>
<feature type="region of interest" description="RNA-binding and homodimerization" evidence="1">
    <location>
        <begin position="1"/>
        <end position="73"/>
    </location>
</feature>
<feature type="region of interest" description="CPSF4-binding" evidence="1">
    <location>
        <begin position="180"/>
        <end position="215"/>
    </location>
</feature>
<feature type="region of interest" description="Disordered" evidence="2">
    <location>
        <begin position="204"/>
        <end position="237"/>
    </location>
</feature>
<feature type="region of interest" description="PABPN1-binding" evidence="1">
    <location>
        <begin position="223"/>
        <end position="230"/>
    </location>
</feature>
<feature type="short sequence motif" description="Nuclear localization signal" evidence="1">
    <location>
        <begin position="34"/>
        <end position="38"/>
    </location>
</feature>
<feature type="short sequence motif" description="Nuclear export signal" evidence="1">
    <location>
        <begin position="137"/>
        <end position="146"/>
    </location>
</feature>
<feature type="compositionally biased region" description="Basic residues" evidence="2">
    <location>
        <begin position="217"/>
        <end position="237"/>
    </location>
</feature>
<reference key="1">
    <citation type="submission" date="2005-12" db="EMBL/GenBank/DDBJ databases">
        <title>The NIAID influenza genome sequencing project.</title>
        <authorList>
            <person name="Ghedin E."/>
            <person name="Spiro D."/>
            <person name="Miller N."/>
            <person name="Zaborsky J."/>
            <person name="Feldblyum T."/>
            <person name="Subbu V."/>
            <person name="Shumway M."/>
            <person name="Sparenborg J."/>
            <person name="Groveman L."/>
            <person name="Halpin R."/>
            <person name="Sitz J."/>
            <person name="Koo H."/>
            <person name="Salzberg S.L."/>
            <person name="Webster R.G."/>
            <person name="Hoffmann E."/>
            <person name="Krauss S."/>
            <person name="Naeve C."/>
            <person name="Bao Y."/>
            <person name="Bolotov P."/>
            <person name="Dernovoy D."/>
            <person name="Kiryutin B."/>
            <person name="Lipman D.J."/>
            <person name="Tatusova T."/>
        </authorList>
    </citation>
    <scope>NUCLEOTIDE SEQUENCE [GENOMIC RNA]</scope>
</reference>
<keyword id="KW-0025">Alternative splicing</keyword>
<keyword id="KW-1262">Eukaryotic host gene expression shutoff by virus</keyword>
<keyword id="KW-1035">Host cytoplasm</keyword>
<keyword id="KW-1190">Host gene expression shutoff by virus</keyword>
<keyword id="KW-1192">Host mRNA suppression by virus</keyword>
<keyword id="KW-1048">Host nucleus</keyword>
<keyword id="KW-0945">Host-virus interaction</keyword>
<keyword id="KW-1090">Inhibition of host innate immune response by virus</keyword>
<keyword id="KW-1114">Inhibition of host interferon signaling pathway by virus</keyword>
<keyword id="KW-1102">Inhibition of host PKR by virus</keyword>
<keyword id="KW-1103">Inhibition of host pre-mRNA processing by virus</keyword>
<keyword id="KW-1088">Inhibition of host RIG-I by virus</keyword>
<keyword id="KW-1113">Inhibition of host RLR pathway by virus</keyword>
<keyword id="KW-0922">Interferon antiviral system evasion</keyword>
<keyword id="KW-0694">RNA-binding</keyword>
<keyword id="KW-0832">Ubl conjugation</keyword>
<keyword id="KW-0899">Viral immunoevasion</keyword>
<evidence type="ECO:0000255" key="1">
    <source>
        <dbReference type="HAMAP-Rule" id="MF_04066"/>
    </source>
</evidence>
<evidence type="ECO:0000256" key="2">
    <source>
        <dbReference type="SAM" id="MobiDB-lite"/>
    </source>
</evidence>
<name>NS1_I76A6</name>
<proteinExistence type="inferred from homology"/>
<comment type="function">
    <text evidence="1">Inhibits post-transcriptional processing of cellular pre-mRNA, by binding and inhibiting two cellular proteins that are required for the 3'-end processing of cellular pre-mRNAs: the 30 kDa cleavage and polyadenylation specificity factor/CPSF4 and the poly(A)-binding protein 2/PABPN1. In turn, unprocessed 3' end pre-mRNAs accumulate in the host nucleus and are no longer exported to the cytoplasm. Cellular protein synthesis is thereby shut off very early after virus infection. Viral protein synthesis is not affected by the inhibition of the cellular 3' end processing machinery because the poly(A) tails of viral mRNAs are produced by the viral polymerase through a stuttering mechanism. Prevents the establishment of the cellular antiviral state by inhibiting TRIM25-mediated RIGI ubiquitination, which normally triggers the antiviral transduction signal that leads to the activation of type I IFN genes by transcription factors IRF3 and IRF7. Also binds poly(A) and U6 snRNA. Inhibits the integrated stress response (ISR) in the infected cell by blocking dsRNA binding by EIF2AK2/PKR and further phosphorylation of EIF2S1/EIF-2ALPHA. Stress granule formation is thus inhibited, which allows protein synthesis and viral replication.</text>
</comment>
<comment type="subunit">
    <text evidence="1">Homodimer. Interacts with host TRIM25 (via coiled coil); this interaction specifically inhibits TRIM25 multimerization and TRIM25-mediated RIGI CARD ubiquitination. Interacts with human EIF2AK2/PKR, CPSF4, IVNS1ABP and PABPN1.</text>
</comment>
<comment type="subcellular location">
    <subcellularLocation>
        <location evidence="1">Host nucleus</location>
    </subcellularLocation>
    <subcellularLocation>
        <location evidence="1">Host cytoplasm</location>
    </subcellularLocation>
    <text evidence="1">In uninfected, transfected cells, NS1 is localized in the nucleus. Only in virus infected cells, the nuclear export signal is unveiled, presumably by a viral protein, and a fraction of NS1 is exported in the cytoplasm.</text>
</comment>
<comment type="alternative products">
    <event type="alternative splicing"/>
    <isoform>
        <id>Q2RFA0-1</id>
        <name>NS1</name>
        <sequence type="displayed"/>
    </isoform>
    <isoform>
        <id>Q2RFA1-1</id>
        <name>NEP</name>
        <name>NS2</name>
        <sequence type="external"/>
    </isoform>
</comment>
<comment type="domain">
    <text evidence="1">The dsRNA-binding region is required for suppression of RNA silencing.</text>
</comment>
<comment type="PTM">
    <text evidence="1">Upon interferon induction, ISGylated via host HERC5; this results in the impairment of NS1 interaction with RNA targets due to its inability to form homodimers and to interact with host EIF2AK2/PKR.</text>
</comment>
<comment type="similarity">
    <text evidence="1">Belongs to the influenza A viruses NS1 family.</text>
</comment>